<comment type="catalytic activity">
    <reaction evidence="1">
        <text>tRNA(Lys) + L-lysine + ATP = L-lysyl-tRNA(Lys) + AMP + diphosphate</text>
        <dbReference type="Rhea" id="RHEA:20792"/>
        <dbReference type="Rhea" id="RHEA-COMP:9696"/>
        <dbReference type="Rhea" id="RHEA-COMP:9697"/>
        <dbReference type="ChEBI" id="CHEBI:30616"/>
        <dbReference type="ChEBI" id="CHEBI:32551"/>
        <dbReference type="ChEBI" id="CHEBI:33019"/>
        <dbReference type="ChEBI" id="CHEBI:78442"/>
        <dbReference type="ChEBI" id="CHEBI:78529"/>
        <dbReference type="ChEBI" id="CHEBI:456215"/>
        <dbReference type="EC" id="6.1.1.6"/>
    </reaction>
</comment>
<comment type="cofactor">
    <cofactor evidence="1">
        <name>Mg(2+)</name>
        <dbReference type="ChEBI" id="CHEBI:18420"/>
    </cofactor>
    <text evidence="1">Binds 3 Mg(2+) ions per subunit.</text>
</comment>
<comment type="subunit">
    <text evidence="1">Homodimer.</text>
</comment>
<comment type="subcellular location">
    <subcellularLocation>
        <location evidence="1">Cytoplasm</location>
    </subcellularLocation>
</comment>
<comment type="similarity">
    <text evidence="1">Belongs to the class-II aminoacyl-tRNA synthetase family.</text>
</comment>
<gene>
    <name evidence="1" type="primary">lysS</name>
    <name type="ordered locus">VP0513</name>
</gene>
<accession>Q87SB1</accession>
<organism>
    <name type="scientific">Vibrio parahaemolyticus serotype O3:K6 (strain RIMD 2210633)</name>
    <dbReference type="NCBI Taxonomy" id="223926"/>
    <lineage>
        <taxon>Bacteria</taxon>
        <taxon>Pseudomonadati</taxon>
        <taxon>Pseudomonadota</taxon>
        <taxon>Gammaproteobacteria</taxon>
        <taxon>Vibrionales</taxon>
        <taxon>Vibrionaceae</taxon>
        <taxon>Vibrio</taxon>
    </lineage>
</organism>
<keyword id="KW-0030">Aminoacyl-tRNA synthetase</keyword>
<keyword id="KW-0067">ATP-binding</keyword>
<keyword id="KW-0963">Cytoplasm</keyword>
<keyword id="KW-0436">Ligase</keyword>
<keyword id="KW-0460">Magnesium</keyword>
<keyword id="KW-0479">Metal-binding</keyword>
<keyword id="KW-0547">Nucleotide-binding</keyword>
<keyword id="KW-0648">Protein biosynthesis</keyword>
<dbReference type="EC" id="6.1.1.6" evidence="1"/>
<dbReference type="EMBL" id="BA000031">
    <property type="protein sequence ID" value="BAC58776.1"/>
    <property type="molecule type" value="Genomic_DNA"/>
</dbReference>
<dbReference type="RefSeq" id="NP_796892.1">
    <property type="nucleotide sequence ID" value="NC_004603.1"/>
</dbReference>
<dbReference type="RefSeq" id="WP_005459407.1">
    <property type="nucleotide sequence ID" value="NC_004603.1"/>
</dbReference>
<dbReference type="SMR" id="Q87SB1"/>
<dbReference type="GeneID" id="1187981"/>
<dbReference type="KEGG" id="vpa:VP0513"/>
<dbReference type="PATRIC" id="fig|223926.6.peg.489"/>
<dbReference type="eggNOG" id="COG1190">
    <property type="taxonomic scope" value="Bacteria"/>
</dbReference>
<dbReference type="HOGENOM" id="CLU_008255_6_0_6"/>
<dbReference type="Proteomes" id="UP000002493">
    <property type="component" value="Chromosome 1"/>
</dbReference>
<dbReference type="GO" id="GO:0005829">
    <property type="term" value="C:cytosol"/>
    <property type="evidence" value="ECO:0007669"/>
    <property type="project" value="TreeGrafter"/>
</dbReference>
<dbReference type="GO" id="GO:0005524">
    <property type="term" value="F:ATP binding"/>
    <property type="evidence" value="ECO:0007669"/>
    <property type="project" value="UniProtKB-UniRule"/>
</dbReference>
<dbReference type="GO" id="GO:0004824">
    <property type="term" value="F:lysine-tRNA ligase activity"/>
    <property type="evidence" value="ECO:0007669"/>
    <property type="project" value="UniProtKB-UniRule"/>
</dbReference>
<dbReference type="GO" id="GO:0000287">
    <property type="term" value="F:magnesium ion binding"/>
    <property type="evidence" value="ECO:0007669"/>
    <property type="project" value="UniProtKB-UniRule"/>
</dbReference>
<dbReference type="GO" id="GO:0000049">
    <property type="term" value="F:tRNA binding"/>
    <property type="evidence" value="ECO:0007669"/>
    <property type="project" value="TreeGrafter"/>
</dbReference>
<dbReference type="GO" id="GO:0006430">
    <property type="term" value="P:lysyl-tRNA aminoacylation"/>
    <property type="evidence" value="ECO:0007669"/>
    <property type="project" value="UniProtKB-UniRule"/>
</dbReference>
<dbReference type="CDD" id="cd00775">
    <property type="entry name" value="LysRS_core"/>
    <property type="match status" value="1"/>
</dbReference>
<dbReference type="CDD" id="cd04322">
    <property type="entry name" value="LysRS_N"/>
    <property type="match status" value="1"/>
</dbReference>
<dbReference type="FunFam" id="2.40.50.140:FF:000024">
    <property type="entry name" value="Lysine--tRNA ligase"/>
    <property type="match status" value="1"/>
</dbReference>
<dbReference type="FunFam" id="3.30.930.10:FF:000001">
    <property type="entry name" value="Lysine--tRNA ligase"/>
    <property type="match status" value="1"/>
</dbReference>
<dbReference type="Gene3D" id="3.30.930.10">
    <property type="entry name" value="Bira Bifunctional Protein, Domain 2"/>
    <property type="match status" value="1"/>
</dbReference>
<dbReference type="Gene3D" id="2.40.50.140">
    <property type="entry name" value="Nucleic acid-binding proteins"/>
    <property type="match status" value="1"/>
</dbReference>
<dbReference type="HAMAP" id="MF_00252">
    <property type="entry name" value="Lys_tRNA_synth_class2"/>
    <property type="match status" value="1"/>
</dbReference>
<dbReference type="InterPro" id="IPR004364">
    <property type="entry name" value="Aa-tRNA-synt_II"/>
</dbReference>
<dbReference type="InterPro" id="IPR006195">
    <property type="entry name" value="aa-tRNA-synth_II"/>
</dbReference>
<dbReference type="InterPro" id="IPR045864">
    <property type="entry name" value="aa-tRNA-synth_II/BPL/LPL"/>
</dbReference>
<dbReference type="InterPro" id="IPR002313">
    <property type="entry name" value="Lys-tRNA-ligase_II"/>
</dbReference>
<dbReference type="InterPro" id="IPR044136">
    <property type="entry name" value="Lys-tRNA-ligase_II_N"/>
</dbReference>
<dbReference type="InterPro" id="IPR018149">
    <property type="entry name" value="Lys-tRNA-synth_II_C"/>
</dbReference>
<dbReference type="InterPro" id="IPR012340">
    <property type="entry name" value="NA-bd_OB-fold"/>
</dbReference>
<dbReference type="InterPro" id="IPR004365">
    <property type="entry name" value="NA-bd_OB_tRNA"/>
</dbReference>
<dbReference type="NCBIfam" id="TIGR00499">
    <property type="entry name" value="lysS_bact"/>
    <property type="match status" value="1"/>
</dbReference>
<dbReference type="NCBIfam" id="NF001756">
    <property type="entry name" value="PRK00484.1"/>
    <property type="match status" value="1"/>
</dbReference>
<dbReference type="PANTHER" id="PTHR42918:SF15">
    <property type="entry name" value="LYSINE--TRNA LIGASE, CHLOROPLASTIC_MITOCHONDRIAL"/>
    <property type="match status" value="1"/>
</dbReference>
<dbReference type="PANTHER" id="PTHR42918">
    <property type="entry name" value="LYSYL-TRNA SYNTHETASE"/>
    <property type="match status" value="1"/>
</dbReference>
<dbReference type="Pfam" id="PF00152">
    <property type="entry name" value="tRNA-synt_2"/>
    <property type="match status" value="1"/>
</dbReference>
<dbReference type="Pfam" id="PF01336">
    <property type="entry name" value="tRNA_anti-codon"/>
    <property type="match status" value="1"/>
</dbReference>
<dbReference type="PRINTS" id="PR00982">
    <property type="entry name" value="TRNASYNTHLYS"/>
</dbReference>
<dbReference type="SUPFAM" id="SSF55681">
    <property type="entry name" value="Class II aaRS and biotin synthetases"/>
    <property type="match status" value="1"/>
</dbReference>
<dbReference type="SUPFAM" id="SSF50249">
    <property type="entry name" value="Nucleic acid-binding proteins"/>
    <property type="match status" value="1"/>
</dbReference>
<dbReference type="PROSITE" id="PS50862">
    <property type="entry name" value="AA_TRNA_LIGASE_II"/>
    <property type="match status" value="1"/>
</dbReference>
<name>SYK_VIBPA</name>
<protein>
    <recommendedName>
        <fullName evidence="1">Lysine--tRNA ligase</fullName>
        <ecNumber evidence="1">6.1.1.6</ecNumber>
    </recommendedName>
    <alternativeName>
        <fullName evidence="1">Lysyl-tRNA synthetase</fullName>
        <shortName evidence="1">LysRS</shortName>
    </alternativeName>
</protein>
<feature type="chain" id="PRO_0000152701" description="Lysine--tRNA ligase">
    <location>
        <begin position="1"/>
        <end position="505"/>
    </location>
</feature>
<feature type="binding site" evidence="1">
    <location>
        <position position="415"/>
    </location>
    <ligand>
        <name>Mg(2+)</name>
        <dbReference type="ChEBI" id="CHEBI:18420"/>
        <label>1</label>
    </ligand>
</feature>
<feature type="binding site" evidence="1">
    <location>
        <position position="422"/>
    </location>
    <ligand>
        <name>Mg(2+)</name>
        <dbReference type="ChEBI" id="CHEBI:18420"/>
        <label>1</label>
    </ligand>
</feature>
<feature type="binding site" evidence="1">
    <location>
        <position position="422"/>
    </location>
    <ligand>
        <name>Mg(2+)</name>
        <dbReference type="ChEBI" id="CHEBI:18420"/>
        <label>2</label>
    </ligand>
</feature>
<proteinExistence type="inferred from homology"/>
<evidence type="ECO:0000255" key="1">
    <source>
        <dbReference type="HAMAP-Rule" id="MF_00252"/>
    </source>
</evidence>
<sequence length="505" mass="57557">MTDAVQNETVQEENKLIAERRAKLDEIRKSCKANGHPNDFRRDALAGDLQKEFGEKTKEELEELNHVVAIAGRIMAKRGPFLVIQETSGRIQAYADKEVQKELKEKYQGLDIGDIIGVKGALHKSGKGDLYVNMEEYELLTKALRPLPEKFHGLTDQEMRYRQRYVDLIVNEDSRNAFVVRSKVMSAIRNFMISKQFMEVETPMMHVIPGGASARPFITHHNALDMPMYLRIAPELYLKRLVVGGFDRVFEINRNFRNEGLSPRHNPEFTMMEFYMAYADYKDLMDFTEELLSSVALEVLGSTSMPYGEDTVEFGGKYARMSMFEAIKHYNPDHAQIQALTEEDLQNRELMVSIAKSVHVEVEPFWTCGQLLEEIFGETAEPKLMQPTFITGYPADISPLARRSDDNPFFTDRFEFFIGGREVANGFSELNDAEDQDARFKAQVEAKESGDDEAMFYDADYITALEHGLPPTAGQGIGIDRLVMLLTNTHTIRDVILFPAMRPQA</sequence>
<reference key="1">
    <citation type="journal article" date="2003" name="Lancet">
        <title>Genome sequence of Vibrio parahaemolyticus: a pathogenic mechanism distinct from that of V. cholerae.</title>
        <authorList>
            <person name="Makino K."/>
            <person name="Oshima K."/>
            <person name="Kurokawa K."/>
            <person name="Yokoyama K."/>
            <person name="Uda T."/>
            <person name="Tagomori K."/>
            <person name="Iijima Y."/>
            <person name="Najima M."/>
            <person name="Nakano M."/>
            <person name="Yamashita A."/>
            <person name="Kubota Y."/>
            <person name="Kimura S."/>
            <person name="Yasunaga T."/>
            <person name="Honda T."/>
            <person name="Shinagawa H."/>
            <person name="Hattori M."/>
            <person name="Iida T."/>
        </authorList>
    </citation>
    <scope>NUCLEOTIDE SEQUENCE [LARGE SCALE GENOMIC DNA]</scope>
    <source>
        <strain>RIMD 2210633</strain>
    </source>
</reference>